<proteinExistence type="inferred from homology"/>
<keyword id="KW-0456">Lyase</keyword>
<keyword id="KW-0479">Metal-binding</keyword>
<organism>
    <name type="scientific">Mycobacterium leprae (strain Br4923)</name>
    <dbReference type="NCBI Taxonomy" id="561304"/>
    <lineage>
        <taxon>Bacteria</taxon>
        <taxon>Bacillati</taxon>
        <taxon>Actinomycetota</taxon>
        <taxon>Actinomycetes</taxon>
        <taxon>Mycobacteriales</taxon>
        <taxon>Mycobacteriaceae</taxon>
        <taxon>Mycobacterium</taxon>
    </lineage>
</organism>
<accession>B8ZTT3</accession>
<comment type="function">
    <text evidence="1">Catalyzes the aldol cleavage of 4-hydroxy-4-methyl-2-oxoglutarate (HMG) into 2 molecules of pyruvate. Also contains a secondary oxaloacetate (OAA) decarboxylase activity due to the common pyruvate enolate transition state formed following C-C bond cleavage in the retro-aldol and decarboxylation reactions (By similarity).</text>
</comment>
<comment type="catalytic activity">
    <reaction>
        <text>4-hydroxy-4-methyl-2-oxoglutarate = 2 pyruvate</text>
        <dbReference type="Rhea" id="RHEA:22748"/>
        <dbReference type="ChEBI" id="CHEBI:15361"/>
        <dbReference type="ChEBI" id="CHEBI:58276"/>
        <dbReference type="EC" id="4.1.3.17"/>
    </reaction>
</comment>
<comment type="catalytic activity">
    <reaction>
        <text>oxaloacetate + H(+) = pyruvate + CO2</text>
        <dbReference type="Rhea" id="RHEA:15641"/>
        <dbReference type="ChEBI" id="CHEBI:15361"/>
        <dbReference type="ChEBI" id="CHEBI:15378"/>
        <dbReference type="ChEBI" id="CHEBI:16452"/>
        <dbReference type="ChEBI" id="CHEBI:16526"/>
        <dbReference type="EC" id="4.1.1.112"/>
    </reaction>
</comment>
<comment type="cofactor">
    <cofactor evidence="1">
        <name>a divalent metal cation</name>
        <dbReference type="ChEBI" id="CHEBI:60240"/>
    </cofactor>
    <text evidence="1">Divalent metal cation.</text>
</comment>
<comment type="subunit">
    <text evidence="1">Homotrimer.</text>
</comment>
<comment type="similarity">
    <text evidence="2">Belongs to the class II aldolase/RraA-like family.</text>
</comment>
<protein>
    <recommendedName>
        <fullName>Putative 4-hydroxy-4-methyl-2-oxoglutarate aldolase</fullName>
        <shortName>HMG aldolase</shortName>
        <ecNumber>4.1.3.17</ecNumber>
    </recommendedName>
    <alternativeName>
        <fullName>Oxaloacetate decarboxylase</fullName>
        <shortName>OAA decarboxylase</shortName>
        <ecNumber>4.1.1.112</ecNumber>
    </alternativeName>
    <alternativeName>
        <fullName>Regulator of ribonuclease activity homolog</fullName>
    </alternativeName>
    <alternativeName>
        <fullName>RraA-like protein</fullName>
    </alternativeName>
</protein>
<feature type="chain" id="PRO_1000135496" description="Putative 4-hydroxy-4-methyl-2-oxoglutarate aldolase">
    <location>
        <begin position="1"/>
        <end position="157"/>
    </location>
</feature>
<feature type="binding site" evidence="1">
    <location>
        <begin position="78"/>
        <end position="81"/>
    </location>
    <ligand>
        <name>substrate</name>
    </ligand>
</feature>
<feature type="binding site" evidence="1">
    <location>
        <position position="100"/>
    </location>
    <ligand>
        <name>substrate</name>
    </ligand>
</feature>
<feature type="binding site" evidence="1">
    <location>
        <position position="101"/>
    </location>
    <ligand>
        <name>a divalent metal cation</name>
        <dbReference type="ChEBI" id="CHEBI:60240"/>
    </ligand>
</feature>
<reference key="1">
    <citation type="journal article" date="2009" name="Nat. Genet.">
        <title>Comparative genomic and phylogeographic analysis of Mycobacterium leprae.</title>
        <authorList>
            <person name="Monot M."/>
            <person name="Honore N."/>
            <person name="Garnier T."/>
            <person name="Zidane N."/>
            <person name="Sherafi D."/>
            <person name="Paniz-Mondolfi A."/>
            <person name="Matsuoka M."/>
            <person name="Taylor G.M."/>
            <person name="Donoghue H.D."/>
            <person name="Bouwman A."/>
            <person name="Mays S."/>
            <person name="Watson C."/>
            <person name="Lockwood D."/>
            <person name="Khamispour A."/>
            <person name="Dowlati Y."/>
            <person name="Jianping S."/>
            <person name="Rea T.H."/>
            <person name="Vera-Cabrera L."/>
            <person name="Stefani M.M."/>
            <person name="Banu S."/>
            <person name="Macdonald M."/>
            <person name="Sapkota B.R."/>
            <person name="Spencer J.S."/>
            <person name="Thomas J."/>
            <person name="Harshman K."/>
            <person name="Singh P."/>
            <person name="Busso P."/>
            <person name="Gattiker A."/>
            <person name="Rougemont J."/>
            <person name="Brennan P.J."/>
            <person name="Cole S.T."/>
        </authorList>
    </citation>
    <scope>NUCLEOTIDE SEQUENCE [LARGE SCALE GENOMIC DNA]</scope>
    <source>
        <strain>Br4923</strain>
    </source>
</reference>
<sequence>MIVSFRPTADLVDSIGVDVRSCDLQFRQFGGCSEFAGPISTVRCFQDNALLKSVLSQTSAGGVLVVDGAGSLHTALVGDVIAELAHSNGWAGLIVNGAVRDAAALRGIDIGIKALGTNPRKSTKIGTGERHVEVNLGGVTFVPGEVVYSDDDGIVVV</sequence>
<evidence type="ECO:0000250" key="1"/>
<evidence type="ECO:0000305" key="2"/>
<name>RRAAH_MYCLB</name>
<gene>
    <name type="ordered locus">MLBr00066</name>
</gene>
<dbReference type="EC" id="4.1.3.17"/>
<dbReference type="EC" id="4.1.1.112"/>
<dbReference type="EMBL" id="FM211192">
    <property type="protein sequence ID" value="CAR70159.1"/>
    <property type="molecule type" value="Genomic_DNA"/>
</dbReference>
<dbReference type="SMR" id="B8ZTT3"/>
<dbReference type="KEGG" id="mlb:MLBr00066"/>
<dbReference type="HOGENOM" id="CLU_072626_4_0_11"/>
<dbReference type="Proteomes" id="UP000006900">
    <property type="component" value="Chromosome"/>
</dbReference>
<dbReference type="GO" id="GO:0047443">
    <property type="term" value="F:4-hydroxy-4-methyl-2-oxoglutarate aldolase activity"/>
    <property type="evidence" value="ECO:0007669"/>
    <property type="project" value="UniProtKB-EC"/>
</dbReference>
<dbReference type="GO" id="GO:0046872">
    <property type="term" value="F:metal ion binding"/>
    <property type="evidence" value="ECO:0007669"/>
    <property type="project" value="UniProtKB-KW"/>
</dbReference>
<dbReference type="GO" id="GO:0008948">
    <property type="term" value="F:oxaloacetate decarboxylase activity"/>
    <property type="evidence" value="ECO:0007669"/>
    <property type="project" value="UniProtKB-EC"/>
</dbReference>
<dbReference type="GO" id="GO:0008428">
    <property type="term" value="F:ribonuclease inhibitor activity"/>
    <property type="evidence" value="ECO:0007669"/>
    <property type="project" value="InterPro"/>
</dbReference>
<dbReference type="GO" id="GO:0051252">
    <property type="term" value="P:regulation of RNA metabolic process"/>
    <property type="evidence" value="ECO:0007669"/>
    <property type="project" value="InterPro"/>
</dbReference>
<dbReference type="CDD" id="cd16841">
    <property type="entry name" value="RraA_family"/>
    <property type="match status" value="1"/>
</dbReference>
<dbReference type="Gene3D" id="3.50.30.40">
    <property type="entry name" value="Ribonuclease E inhibitor RraA/RraA-like"/>
    <property type="match status" value="1"/>
</dbReference>
<dbReference type="InterPro" id="IPR010203">
    <property type="entry name" value="RraA"/>
</dbReference>
<dbReference type="InterPro" id="IPR005493">
    <property type="entry name" value="RraA/RraA-like"/>
</dbReference>
<dbReference type="InterPro" id="IPR036704">
    <property type="entry name" value="RraA/RraA-like_sf"/>
</dbReference>
<dbReference type="NCBIfam" id="TIGR01935">
    <property type="entry name" value="NOT-MenG"/>
    <property type="match status" value="1"/>
</dbReference>
<dbReference type="NCBIfam" id="NF006875">
    <property type="entry name" value="PRK09372.1"/>
    <property type="match status" value="1"/>
</dbReference>
<dbReference type="PANTHER" id="PTHR33254">
    <property type="entry name" value="4-HYDROXY-4-METHYL-2-OXOGLUTARATE ALDOLASE 3-RELATED"/>
    <property type="match status" value="1"/>
</dbReference>
<dbReference type="PANTHER" id="PTHR33254:SF4">
    <property type="entry name" value="4-HYDROXY-4-METHYL-2-OXOGLUTARATE ALDOLASE 3-RELATED"/>
    <property type="match status" value="1"/>
</dbReference>
<dbReference type="Pfam" id="PF03737">
    <property type="entry name" value="RraA-like"/>
    <property type="match status" value="1"/>
</dbReference>
<dbReference type="SUPFAM" id="SSF89562">
    <property type="entry name" value="RraA-like"/>
    <property type="match status" value="1"/>
</dbReference>